<feature type="chain" id="PRO_0000372656" description="Slender lobes-like protein">
    <location>
        <begin position="1"/>
        <end position="674"/>
    </location>
</feature>
<feature type="region of interest" description="Disordered" evidence="1">
    <location>
        <begin position="65"/>
        <end position="137"/>
    </location>
</feature>
<feature type="region of interest" description="Disordered" evidence="1">
    <location>
        <begin position="168"/>
        <end position="321"/>
    </location>
</feature>
<feature type="region of interest" description="Disordered" evidence="1">
    <location>
        <begin position="352"/>
        <end position="382"/>
    </location>
</feature>
<feature type="region of interest" description="Disordered" evidence="1">
    <location>
        <begin position="395"/>
        <end position="585"/>
    </location>
</feature>
<feature type="region of interest" description="Disordered" evidence="1">
    <location>
        <begin position="618"/>
        <end position="659"/>
    </location>
</feature>
<feature type="compositionally biased region" description="Basic residues" evidence="1">
    <location>
        <begin position="73"/>
        <end position="97"/>
    </location>
</feature>
<feature type="compositionally biased region" description="Polar residues" evidence="1">
    <location>
        <begin position="127"/>
        <end position="137"/>
    </location>
</feature>
<feature type="compositionally biased region" description="Acidic residues" evidence="1">
    <location>
        <begin position="216"/>
        <end position="228"/>
    </location>
</feature>
<feature type="compositionally biased region" description="Basic and acidic residues" evidence="1">
    <location>
        <begin position="233"/>
        <end position="245"/>
    </location>
</feature>
<feature type="compositionally biased region" description="Basic and acidic residues" evidence="1">
    <location>
        <begin position="272"/>
        <end position="312"/>
    </location>
</feature>
<feature type="compositionally biased region" description="Basic residues" evidence="1">
    <location>
        <begin position="400"/>
        <end position="410"/>
    </location>
</feature>
<feature type="compositionally biased region" description="Basic residues" evidence="1">
    <location>
        <begin position="548"/>
        <end position="558"/>
    </location>
</feature>
<feature type="modified residue" description="Phosphoserine" evidence="2">
    <location>
        <position position="248"/>
    </location>
</feature>
<feature type="modified residue" description="Phosphoserine" evidence="2">
    <location>
        <position position="358"/>
    </location>
</feature>
<feature type="modified residue" description="Phosphoserine" evidence="2">
    <location>
        <position position="391"/>
    </location>
</feature>
<feature type="modified residue" description="Phosphoserine" evidence="2">
    <location>
        <position position="414"/>
    </location>
</feature>
<feature type="sequence conflict" description="In Ref. 3; AAM11003." evidence="3" ref="3">
    <original>A</original>
    <variation>D</variation>
    <location>
        <position position="232"/>
    </location>
</feature>
<feature type="sequence conflict" description="In Ref. 3; AAM11003." evidence="3" ref="3">
    <original>I</original>
    <variation>S</variation>
    <location>
        <position position="313"/>
    </location>
</feature>
<feature type="sequence conflict" description="In Ref. 3; AAM11003." evidence="3" ref="3">
    <original>L</original>
    <variation>P</variation>
    <location>
        <position position="333"/>
    </location>
</feature>
<comment type="sequence caution" evidence="3">
    <conflict type="erroneous initiation">
        <sequence resource="EMBL-CDS" id="AAM11003"/>
    </conflict>
</comment>
<keyword id="KW-0597">Phosphoprotein</keyword>
<keyword id="KW-1185">Reference proteome</keyword>
<accession>Q9VGZ8</accession>
<accession>Q8T3Q6</accession>
<reference key="1">
    <citation type="journal article" date="2000" name="Science">
        <title>The genome sequence of Drosophila melanogaster.</title>
        <authorList>
            <person name="Adams M.D."/>
            <person name="Celniker S.E."/>
            <person name="Holt R.A."/>
            <person name="Evans C.A."/>
            <person name="Gocayne J.D."/>
            <person name="Amanatides P.G."/>
            <person name="Scherer S.E."/>
            <person name="Li P.W."/>
            <person name="Hoskins R.A."/>
            <person name="Galle R.F."/>
            <person name="George R.A."/>
            <person name="Lewis S.E."/>
            <person name="Richards S."/>
            <person name="Ashburner M."/>
            <person name="Henderson S.N."/>
            <person name="Sutton G.G."/>
            <person name="Wortman J.R."/>
            <person name="Yandell M.D."/>
            <person name="Zhang Q."/>
            <person name="Chen L.X."/>
            <person name="Brandon R.C."/>
            <person name="Rogers Y.-H.C."/>
            <person name="Blazej R.G."/>
            <person name="Champe M."/>
            <person name="Pfeiffer B.D."/>
            <person name="Wan K.H."/>
            <person name="Doyle C."/>
            <person name="Baxter E.G."/>
            <person name="Helt G."/>
            <person name="Nelson C.R."/>
            <person name="Miklos G.L.G."/>
            <person name="Abril J.F."/>
            <person name="Agbayani A."/>
            <person name="An H.-J."/>
            <person name="Andrews-Pfannkoch C."/>
            <person name="Baldwin D."/>
            <person name="Ballew R.M."/>
            <person name="Basu A."/>
            <person name="Baxendale J."/>
            <person name="Bayraktaroglu L."/>
            <person name="Beasley E.M."/>
            <person name="Beeson K.Y."/>
            <person name="Benos P.V."/>
            <person name="Berman B.P."/>
            <person name="Bhandari D."/>
            <person name="Bolshakov S."/>
            <person name="Borkova D."/>
            <person name="Botchan M.R."/>
            <person name="Bouck J."/>
            <person name="Brokstein P."/>
            <person name="Brottier P."/>
            <person name="Burtis K.C."/>
            <person name="Busam D.A."/>
            <person name="Butler H."/>
            <person name="Cadieu E."/>
            <person name="Center A."/>
            <person name="Chandra I."/>
            <person name="Cherry J.M."/>
            <person name="Cawley S."/>
            <person name="Dahlke C."/>
            <person name="Davenport L.B."/>
            <person name="Davies P."/>
            <person name="de Pablos B."/>
            <person name="Delcher A."/>
            <person name="Deng Z."/>
            <person name="Mays A.D."/>
            <person name="Dew I."/>
            <person name="Dietz S.M."/>
            <person name="Dodson K."/>
            <person name="Doup L.E."/>
            <person name="Downes M."/>
            <person name="Dugan-Rocha S."/>
            <person name="Dunkov B.C."/>
            <person name="Dunn P."/>
            <person name="Durbin K.J."/>
            <person name="Evangelista C.C."/>
            <person name="Ferraz C."/>
            <person name="Ferriera S."/>
            <person name="Fleischmann W."/>
            <person name="Fosler C."/>
            <person name="Gabrielian A.E."/>
            <person name="Garg N.S."/>
            <person name="Gelbart W.M."/>
            <person name="Glasser K."/>
            <person name="Glodek A."/>
            <person name="Gong F."/>
            <person name="Gorrell J.H."/>
            <person name="Gu Z."/>
            <person name="Guan P."/>
            <person name="Harris M."/>
            <person name="Harris N.L."/>
            <person name="Harvey D.A."/>
            <person name="Heiman T.J."/>
            <person name="Hernandez J.R."/>
            <person name="Houck J."/>
            <person name="Hostin D."/>
            <person name="Houston K.A."/>
            <person name="Howland T.J."/>
            <person name="Wei M.-H."/>
            <person name="Ibegwam C."/>
            <person name="Jalali M."/>
            <person name="Kalush F."/>
            <person name="Karpen G.H."/>
            <person name="Ke Z."/>
            <person name="Kennison J.A."/>
            <person name="Ketchum K.A."/>
            <person name="Kimmel B.E."/>
            <person name="Kodira C.D."/>
            <person name="Kraft C.L."/>
            <person name="Kravitz S."/>
            <person name="Kulp D."/>
            <person name="Lai Z."/>
            <person name="Lasko P."/>
            <person name="Lei Y."/>
            <person name="Levitsky A.A."/>
            <person name="Li J.H."/>
            <person name="Li Z."/>
            <person name="Liang Y."/>
            <person name="Lin X."/>
            <person name="Liu X."/>
            <person name="Mattei B."/>
            <person name="McIntosh T.C."/>
            <person name="McLeod M.P."/>
            <person name="McPherson D."/>
            <person name="Merkulov G."/>
            <person name="Milshina N.V."/>
            <person name="Mobarry C."/>
            <person name="Morris J."/>
            <person name="Moshrefi A."/>
            <person name="Mount S.M."/>
            <person name="Moy M."/>
            <person name="Murphy B."/>
            <person name="Murphy L."/>
            <person name="Muzny D.M."/>
            <person name="Nelson D.L."/>
            <person name="Nelson D.R."/>
            <person name="Nelson K.A."/>
            <person name="Nixon K."/>
            <person name="Nusskern D.R."/>
            <person name="Pacleb J.M."/>
            <person name="Palazzolo M."/>
            <person name="Pittman G.S."/>
            <person name="Pan S."/>
            <person name="Pollard J."/>
            <person name="Puri V."/>
            <person name="Reese M.G."/>
            <person name="Reinert K."/>
            <person name="Remington K."/>
            <person name="Saunders R.D.C."/>
            <person name="Scheeler F."/>
            <person name="Shen H."/>
            <person name="Shue B.C."/>
            <person name="Siden-Kiamos I."/>
            <person name="Simpson M."/>
            <person name="Skupski M.P."/>
            <person name="Smith T.J."/>
            <person name="Spier E."/>
            <person name="Spradling A.C."/>
            <person name="Stapleton M."/>
            <person name="Strong R."/>
            <person name="Sun E."/>
            <person name="Svirskas R."/>
            <person name="Tector C."/>
            <person name="Turner R."/>
            <person name="Venter E."/>
            <person name="Wang A.H."/>
            <person name="Wang X."/>
            <person name="Wang Z.-Y."/>
            <person name="Wassarman D.A."/>
            <person name="Weinstock G.M."/>
            <person name="Weissenbach J."/>
            <person name="Williams S.M."/>
            <person name="Woodage T."/>
            <person name="Worley K.C."/>
            <person name="Wu D."/>
            <person name="Yang S."/>
            <person name="Yao Q.A."/>
            <person name="Ye J."/>
            <person name="Yeh R.-F."/>
            <person name="Zaveri J.S."/>
            <person name="Zhan M."/>
            <person name="Zhang G."/>
            <person name="Zhao Q."/>
            <person name="Zheng L."/>
            <person name="Zheng X.H."/>
            <person name="Zhong F.N."/>
            <person name="Zhong W."/>
            <person name="Zhou X."/>
            <person name="Zhu S.C."/>
            <person name="Zhu X."/>
            <person name="Smith H.O."/>
            <person name="Gibbs R.A."/>
            <person name="Myers E.W."/>
            <person name="Rubin G.M."/>
            <person name="Venter J.C."/>
        </authorList>
    </citation>
    <scope>NUCLEOTIDE SEQUENCE [LARGE SCALE GENOMIC DNA]</scope>
    <source>
        <strain>Berkeley</strain>
    </source>
</reference>
<reference key="2">
    <citation type="journal article" date="2002" name="Genome Biol.">
        <title>Annotation of the Drosophila melanogaster euchromatic genome: a systematic review.</title>
        <authorList>
            <person name="Misra S."/>
            <person name="Crosby M.A."/>
            <person name="Mungall C.J."/>
            <person name="Matthews B.B."/>
            <person name="Campbell K.S."/>
            <person name="Hradecky P."/>
            <person name="Huang Y."/>
            <person name="Kaminker J.S."/>
            <person name="Millburn G.H."/>
            <person name="Prochnik S.E."/>
            <person name="Smith C.D."/>
            <person name="Tupy J.L."/>
            <person name="Whitfield E.J."/>
            <person name="Bayraktaroglu L."/>
            <person name="Berman B.P."/>
            <person name="Bettencourt B.R."/>
            <person name="Celniker S.E."/>
            <person name="de Grey A.D.N.J."/>
            <person name="Drysdale R.A."/>
            <person name="Harris N.L."/>
            <person name="Richter J."/>
            <person name="Russo S."/>
            <person name="Schroeder A.J."/>
            <person name="Shu S.Q."/>
            <person name="Stapleton M."/>
            <person name="Yamada C."/>
            <person name="Ashburner M."/>
            <person name="Gelbart W.M."/>
            <person name="Rubin G.M."/>
            <person name="Lewis S.E."/>
        </authorList>
    </citation>
    <scope>GENOME REANNOTATION</scope>
    <source>
        <strain>Berkeley</strain>
    </source>
</reference>
<reference key="3">
    <citation type="journal article" date="2002" name="Genome Biol.">
        <title>A Drosophila full-length cDNA resource.</title>
        <authorList>
            <person name="Stapleton M."/>
            <person name="Carlson J.W."/>
            <person name="Brokstein P."/>
            <person name="Yu C."/>
            <person name="Champe M."/>
            <person name="George R.A."/>
            <person name="Guarin H."/>
            <person name="Kronmiller B."/>
            <person name="Pacleb J.M."/>
            <person name="Park S."/>
            <person name="Wan K.H."/>
            <person name="Rubin G.M."/>
            <person name="Celniker S.E."/>
        </authorList>
    </citation>
    <scope>NUCLEOTIDE SEQUENCE [LARGE SCALE MRNA] OF 161-674</scope>
    <source>
        <strain>Berkeley</strain>
        <tissue>Testis</tissue>
    </source>
</reference>
<reference key="4">
    <citation type="journal article" date="2007" name="Mol. Biosyst.">
        <title>An integrated chemical, mass spectrometric and computational strategy for (quantitative) phosphoproteomics: application to Drosophila melanogaster Kc167 cells.</title>
        <authorList>
            <person name="Bodenmiller B."/>
            <person name="Mueller L.N."/>
            <person name="Pedrioli P.G.A."/>
            <person name="Pflieger D."/>
            <person name="Juenger M.A."/>
            <person name="Eng J.K."/>
            <person name="Aebersold R."/>
            <person name="Tao W.A."/>
        </authorList>
    </citation>
    <scope>PHOSPHORYLATION [LARGE SCALE ANALYSIS] AT SER-248; SER-358; SER-391 AND SER-414</scope>
    <scope>IDENTIFICATION BY MASS SPECTROMETRY</scope>
</reference>
<organism>
    <name type="scientific">Drosophila melanogaster</name>
    <name type="common">Fruit fly</name>
    <dbReference type="NCBI Taxonomy" id="7227"/>
    <lineage>
        <taxon>Eukaryota</taxon>
        <taxon>Metazoa</taxon>
        <taxon>Ecdysozoa</taxon>
        <taxon>Arthropoda</taxon>
        <taxon>Hexapoda</taxon>
        <taxon>Insecta</taxon>
        <taxon>Pterygota</taxon>
        <taxon>Neoptera</taxon>
        <taxon>Endopterygota</taxon>
        <taxon>Diptera</taxon>
        <taxon>Brachycera</taxon>
        <taxon>Muscomorpha</taxon>
        <taxon>Ephydroidea</taxon>
        <taxon>Drosophilidae</taxon>
        <taxon>Drosophila</taxon>
        <taxon>Sophophora</taxon>
    </lineage>
</organism>
<gene>
    <name type="ORF">CG12592</name>
</gene>
<proteinExistence type="evidence at protein level"/>
<evidence type="ECO:0000256" key="1">
    <source>
        <dbReference type="SAM" id="MobiDB-lite"/>
    </source>
</evidence>
<evidence type="ECO:0000269" key="2">
    <source>
    </source>
</evidence>
<evidence type="ECO:0000305" key="3"/>
<protein>
    <recommendedName>
        <fullName>Slender lobes-like protein</fullName>
    </recommendedName>
</protein>
<name>SLEL_DROME</name>
<dbReference type="EMBL" id="AE014297">
    <property type="protein sequence ID" value="AAF54523.3"/>
    <property type="molecule type" value="Genomic_DNA"/>
</dbReference>
<dbReference type="EMBL" id="AY094650">
    <property type="protein sequence ID" value="AAM11003.1"/>
    <property type="status" value="ALT_INIT"/>
    <property type="molecule type" value="mRNA"/>
</dbReference>
<dbReference type="RefSeq" id="NP_731474.1">
    <property type="nucleotide sequence ID" value="NM_169340.2"/>
</dbReference>
<dbReference type="SMR" id="Q9VGZ8"/>
<dbReference type="BioGRID" id="66410">
    <property type="interactions" value="7"/>
</dbReference>
<dbReference type="STRING" id="7227.FBpp0081711"/>
<dbReference type="iPTMnet" id="Q9VGZ8"/>
<dbReference type="PaxDb" id="7227-FBpp0081711"/>
<dbReference type="EnsemblMetazoa" id="FBtr0082233">
    <property type="protein sequence ID" value="FBpp0081711"/>
    <property type="gene ID" value="FBgn0037811"/>
</dbReference>
<dbReference type="GeneID" id="41263"/>
<dbReference type="KEGG" id="dme:Dmel_CG12592"/>
<dbReference type="UCSC" id="CG12592-RA">
    <property type="organism name" value="d. melanogaster"/>
</dbReference>
<dbReference type="AGR" id="FB:FBgn0037811"/>
<dbReference type="FlyBase" id="FBgn0037811">
    <property type="gene designation" value="CG12592"/>
</dbReference>
<dbReference type="VEuPathDB" id="VectorBase:FBgn0037811"/>
<dbReference type="eggNOG" id="ENOG502QVZW">
    <property type="taxonomic scope" value="Eukaryota"/>
</dbReference>
<dbReference type="GeneTree" id="ENSGT00940000170886"/>
<dbReference type="HOGENOM" id="CLU_407838_0_0_1"/>
<dbReference type="InParanoid" id="Q9VGZ8"/>
<dbReference type="OrthoDB" id="8070558at2759"/>
<dbReference type="PhylomeDB" id="Q9VGZ8"/>
<dbReference type="BioGRID-ORCS" id="41263">
    <property type="hits" value="0 hits in 1 CRISPR screen"/>
</dbReference>
<dbReference type="GenomeRNAi" id="41263"/>
<dbReference type="PRO" id="PR:Q9VGZ8"/>
<dbReference type="Proteomes" id="UP000000803">
    <property type="component" value="Chromosome 3R"/>
</dbReference>
<dbReference type="Bgee" id="FBgn0037811">
    <property type="expression patterns" value="Expressed in central brain primordium (Drosophila) and 40 other cell types or tissues"/>
</dbReference>
<sequence>MRTIFNAKIGDAAYIQDELSSSLSSSVASKFKEFSKRKRISDSFSDLSEELERIGLRQMRKRIKLEKSFERTPKKKVQTKKHLPPVRKKDSVKRRRIIIASPSDEEHDGKVQTNDDSSENKTEKPKNQSNCSSNASKLSEAAQLLNVSEEKSSISETELERSRQVALNELNKSERFNKTETQLDISVMEVDSSDHDEEEKTEKVGAKNNRSLYEIVDSDDEEEQDQDQSDAAKPAESENHSEIKKSTSFMDQMSGAKGNKSVYEIMDSYETEDPKEAGKNEESDKDKPAENGKSDKDKQAETEMSDEDKPSEIKSPSTIKKSIISTADEEALLAELASSDLSHLEKMFNPLQKSRRQSLHVPSPELAAKNPKLRRRSERVEVGNDFCPSQSFVDMVAEKKRQKNKRKRLSKSLSGAPEDLEEMEIKHERKRLKSSHGASTDSMEEDNENETMTVAEEHHSDGEVSNGEVPIEEKPTTSSEKPSASELPEEGNSAPPALKKDVKRLQAARQAVSHAVNLLAPPKATEAEPRTLSRKLSPQPPVVDKKSAKQKKKGKKKQKPQEASPLKSSDEENHGHRIRTNAGYVTVVDEPPTKVPIIELIKTSSGMVRVEPCTPKQKYFRELPPTPKMHGFREEPGPSGMSRKRAKHAAPKVEHNSAKQAALRFKEQIFARRS</sequence>